<proteinExistence type="evidence at transcript level"/>
<reference key="1">
    <citation type="journal article" date="2005" name="Science">
        <title>The transcriptional landscape of the mammalian genome.</title>
        <authorList>
            <person name="Carninci P."/>
            <person name="Kasukawa T."/>
            <person name="Katayama S."/>
            <person name="Gough J."/>
            <person name="Frith M.C."/>
            <person name="Maeda N."/>
            <person name="Oyama R."/>
            <person name="Ravasi T."/>
            <person name="Lenhard B."/>
            <person name="Wells C."/>
            <person name="Kodzius R."/>
            <person name="Shimokawa K."/>
            <person name="Bajic V.B."/>
            <person name="Brenner S.E."/>
            <person name="Batalov S."/>
            <person name="Forrest A.R."/>
            <person name="Zavolan M."/>
            <person name="Davis M.J."/>
            <person name="Wilming L.G."/>
            <person name="Aidinis V."/>
            <person name="Allen J.E."/>
            <person name="Ambesi-Impiombato A."/>
            <person name="Apweiler R."/>
            <person name="Aturaliya R.N."/>
            <person name="Bailey T.L."/>
            <person name="Bansal M."/>
            <person name="Baxter L."/>
            <person name="Beisel K.W."/>
            <person name="Bersano T."/>
            <person name="Bono H."/>
            <person name="Chalk A.M."/>
            <person name="Chiu K.P."/>
            <person name="Choudhary V."/>
            <person name="Christoffels A."/>
            <person name="Clutterbuck D.R."/>
            <person name="Crowe M.L."/>
            <person name="Dalla E."/>
            <person name="Dalrymple B.P."/>
            <person name="de Bono B."/>
            <person name="Della Gatta G."/>
            <person name="di Bernardo D."/>
            <person name="Down T."/>
            <person name="Engstrom P."/>
            <person name="Fagiolini M."/>
            <person name="Faulkner G."/>
            <person name="Fletcher C.F."/>
            <person name="Fukushima T."/>
            <person name="Furuno M."/>
            <person name="Futaki S."/>
            <person name="Gariboldi M."/>
            <person name="Georgii-Hemming P."/>
            <person name="Gingeras T.R."/>
            <person name="Gojobori T."/>
            <person name="Green R.E."/>
            <person name="Gustincich S."/>
            <person name="Harbers M."/>
            <person name="Hayashi Y."/>
            <person name="Hensch T.K."/>
            <person name="Hirokawa N."/>
            <person name="Hill D."/>
            <person name="Huminiecki L."/>
            <person name="Iacono M."/>
            <person name="Ikeo K."/>
            <person name="Iwama A."/>
            <person name="Ishikawa T."/>
            <person name="Jakt M."/>
            <person name="Kanapin A."/>
            <person name="Katoh M."/>
            <person name="Kawasawa Y."/>
            <person name="Kelso J."/>
            <person name="Kitamura H."/>
            <person name="Kitano H."/>
            <person name="Kollias G."/>
            <person name="Krishnan S.P."/>
            <person name="Kruger A."/>
            <person name="Kummerfeld S.K."/>
            <person name="Kurochkin I.V."/>
            <person name="Lareau L.F."/>
            <person name="Lazarevic D."/>
            <person name="Lipovich L."/>
            <person name="Liu J."/>
            <person name="Liuni S."/>
            <person name="McWilliam S."/>
            <person name="Madan Babu M."/>
            <person name="Madera M."/>
            <person name="Marchionni L."/>
            <person name="Matsuda H."/>
            <person name="Matsuzawa S."/>
            <person name="Miki H."/>
            <person name="Mignone F."/>
            <person name="Miyake S."/>
            <person name="Morris K."/>
            <person name="Mottagui-Tabar S."/>
            <person name="Mulder N."/>
            <person name="Nakano N."/>
            <person name="Nakauchi H."/>
            <person name="Ng P."/>
            <person name="Nilsson R."/>
            <person name="Nishiguchi S."/>
            <person name="Nishikawa S."/>
            <person name="Nori F."/>
            <person name="Ohara O."/>
            <person name="Okazaki Y."/>
            <person name="Orlando V."/>
            <person name="Pang K.C."/>
            <person name="Pavan W.J."/>
            <person name="Pavesi G."/>
            <person name="Pesole G."/>
            <person name="Petrovsky N."/>
            <person name="Piazza S."/>
            <person name="Reed J."/>
            <person name="Reid J.F."/>
            <person name="Ring B.Z."/>
            <person name="Ringwald M."/>
            <person name="Rost B."/>
            <person name="Ruan Y."/>
            <person name="Salzberg S.L."/>
            <person name="Sandelin A."/>
            <person name="Schneider C."/>
            <person name="Schoenbach C."/>
            <person name="Sekiguchi K."/>
            <person name="Semple C.A."/>
            <person name="Seno S."/>
            <person name="Sessa L."/>
            <person name="Sheng Y."/>
            <person name="Shibata Y."/>
            <person name="Shimada H."/>
            <person name="Shimada K."/>
            <person name="Silva D."/>
            <person name="Sinclair B."/>
            <person name="Sperling S."/>
            <person name="Stupka E."/>
            <person name="Sugiura K."/>
            <person name="Sultana R."/>
            <person name="Takenaka Y."/>
            <person name="Taki K."/>
            <person name="Tammoja K."/>
            <person name="Tan S.L."/>
            <person name="Tang S."/>
            <person name="Taylor M.S."/>
            <person name="Tegner J."/>
            <person name="Teichmann S.A."/>
            <person name="Ueda H.R."/>
            <person name="van Nimwegen E."/>
            <person name="Verardo R."/>
            <person name="Wei C.L."/>
            <person name="Yagi K."/>
            <person name="Yamanishi H."/>
            <person name="Zabarovsky E."/>
            <person name="Zhu S."/>
            <person name="Zimmer A."/>
            <person name="Hide W."/>
            <person name="Bult C."/>
            <person name="Grimmond S.M."/>
            <person name="Teasdale R.D."/>
            <person name="Liu E.T."/>
            <person name="Brusic V."/>
            <person name="Quackenbush J."/>
            <person name="Wahlestedt C."/>
            <person name="Mattick J.S."/>
            <person name="Hume D.A."/>
            <person name="Kai C."/>
            <person name="Sasaki D."/>
            <person name="Tomaru Y."/>
            <person name="Fukuda S."/>
            <person name="Kanamori-Katayama M."/>
            <person name="Suzuki M."/>
            <person name="Aoki J."/>
            <person name="Arakawa T."/>
            <person name="Iida J."/>
            <person name="Imamura K."/>
            <person name="Itoh M."/>
            <person name="Kato T."/>
            <person name="Kawaji H."/>
            <person name="Kawagashira N."/>
            <person name="Kawashima T."/>
            <person name="Kojima M."/>
            <person name="Kondo S."/>
            <person name="Konno H."/>
            <person name="Nakano K."/>
            <person name="Ninomiya N."/>
            <person name="Nishio T."/>
            <person name="Okada M."/>
            <person name="Plessy C."/>
            <person name="Shibata K."/>
            <person name="Shiraki T."/>
            <person name="Suzuki S."/>
            <person name="Tagami M."/>
            <person name="Waki K."/>
            <person name="Watahiki A."/>
            <person name="Okamura-Oho Y."/>
            <person name="Suzuki H."/>
            <person name="Kawai J."/>
            <person name="Hayashizaki Y."/>
        </authorList>
    </citation>
    <scope>NUCLEOTIDE SEQUENCE [LARGE SCALE MRNA]</scope>
    <source>
        <strain>C57BL/6J</strain>
        <tissue>Cecum</tissue>
        <tissue>Colon</tissue>
        <tissue>Medulla oblongata</tissue>
    </source>
</reference>
<reference key="2">
    <citation type="journal article" date="2004" name="Genome Res.">
        <title>The status, quality, and expansion of the NIH full-length cDNA project: the Mammalian Gene Collection (MGC).</title>
        <authorList>
            <consortium name="The MGC Project Team"/>
        </authorList>
    </citation>
    <scope>NUCLEOTIDE SEQUENCE [LARGE SCALE MRNA]</scope>
    <source>
        <strain>FVB/N</strain>
        <tissue>Mammary tumor</tissue>
    </source>
</reference>
<keyword id="KW-0325">Glycoprotein</keyword>
<keyword id="KW-0472">Membrane</keyword>
<keyword id="KW-1185">Reference proteome</keyword>
<keyword id="KW-0732">Signal</keyword>
<keyword id="KW-0812">Transmembrane</keyword>
<keyword id="KW-1133">Transmembrane helix</keyword>
<feature type="signal peptide" evidence="1">
    <location>
        <begin position="1"/>
        <end position="24"/>
    </location>
</feature>
<feature type="chain" id="PRO_0000021638" description="MANSC domain-containing protein 1">
    <location>
        <begin position="25"/>
        <end position="414"/>
    </location>
</feature>
<feature type="topological domain" description="Extracellular" evidence="1">
    <location>
        <begin position="25"/>
        <end position="369"/>
    </location>
</feature>
<feature type="transmembrane region" description="Helical" evidence="1">
    <location>
        <begin position="370"/>
        <end position="392"/>
    </location>
</feature>
<feature type="topological domain" description="Cytoplasmic" evidence="1">
    <location>
        <begin position="393"/>
        <end position="414"/>
    </location>
</feature>
<feature type="domain" description="MANSC" evidence="2">
    <location>
        <begin position="32"/>
        <end position="116"/>
    </location>
</feature>
<feature type="region of interest" description="Disordered" evidence="3">
    <location>
        <begin position="311"/>
        <end position="339"/>
    </location>
</feature>
<feature type="compositionally biased region" description="Polar residues" evidence="3">
    <location>
        <begin position="326"/>
        <end position="338"/>
    </location>
</feature>
<feature type="glycosylation site" description="N-linked (GlcNAc...) asparagine" evidence="1">
    <location>
        <position position="128"/>
    </location>
</feature>
<feature type="glycosylation site" description="N-linked (GlcNAc...) asparagine" evidence="1">
    <location>
        <position position="234"/>
    </location>
</feature>
<feature type="glycosylation site" description="N-linked (GlcNAc...) asparagine" evidence="1">
    <location>
        <position position="335"/>
    </location>
</feature>
<feature type="sequence conflict" description="In Ref. 2; AAH39930." evidence="4" ref="2">
    <original>SLL</original>
    <variation>ALV</variation>
    <location>
        <begin position="11"/>
        <end position="13"/>
    </location>
</feature>
<feature type="sequence conflict" description="In Ref. 2; AAH39930." evidence="4" ref="2">
    <original>L</original>
    <variation>V</variation>
    <location>
        <position position="56"/>
    </location>
</feature>
<feature type="sequence conflict" description="In Ref. 2; AAH39930." evidence="4" ref="2">
    <original>I</original>
    <variation>V</variation>
    <location>
        <position position="63"/>
    </location>
</feature>
<feature type="sequence conflict" description="In Ref. 2; AAH39930." evidence="4" ref="2">
    <original>F</original>
    <variation>S</variation>
    <location>
        <position position="139"/>
    </location>
</feature>
<feature type="sequence conflict" description="In Ref. 2; AAH39930." evidence="4" ref="2">
    <original>R</original>
    <variation>G</variation>
    <location>
        <position position="170"/>
    </location>
</feature>
<feature type="sequence conflict" description="In Ref. 2; AAH39930." evidence="4" ref="2">
    <original>M</original>
    <variation>T</variation>
    <location>
        <position position="192"/>
    </location>
</feature>
<feature type="sequence conflict" description="In Ref. 2; AAH39930." evidence="4" ref="2">
    <original>E</original>
    <variation>A</variation>
    <location>
        <position position="242"/>
    </location>
</feature>
<feature type="sequence conflict" description="In Ref. 2; AAH39930." evidence="4" ref="2">
    <original>G</original>
    <variation>A</variation>
    <location>
        <position position="275"/>
    </location>
</feature>
<sequence>MLFRGTSLAYSLLVISFLTPRSSAGQNCLTKSLEDVVIDIQSSLSKGIRGNEPIHLATQEDCIGACCSTKDIAGDKACNLMIFDTRKTDRQPNCYLFFCPSEDACPLKPAKGLVTYRLIRDFPLTSANSSLQQLTQGEFLLLDHSSPGATPGFRTPAGYPKPTGLSWSDRSSLKSTAPLHLRKHIKADETSMQLPEEKSHSQSLQLPSELKMAHLLPKTVPTPPTTVAVAPLRNVSATLKPELLLTSISVTAKTLKQKEATTASPVTTVTSKLPGVPGSTSFTPVVTHQAALTNTFQAHTDSKGILETMPFQGGSTLTSDPRHGKSSTSESSITNKTASWEDRRVSVGSASLNKGPKSQHGLSFEKWLLIGTLLCGVLFLVIGLVLLGRMLVEALRRKRYSRLDYLINGIYVDI</sequence>
<gene>
    <name type="primary">Mansc1</name>
</gene>
<comment type="subcellular location">
    <subcellularLocation>
        <location evidence="4">Membrane</location>
        <topology evidence="4">Single-pass type I membrane protein</topology>
    </subcellularLocation>
</comment>
<accession>Q9CR33</accession>
<accession>Q80V71</accession>
<protein>
    <recommendedName>
        <fullName>MANSC domain-containing protein 1</fullName>
    </recommendedName>
</protein>
<dbReference type="EMBL" id="AK018660">
    <property type="protein sequence ID" value="BAB31329.1"/>
    <property type="molecule type" value="mRNA"/>
</dbReference>
<dbReference type="EMBL" id="AK018635">
    <property type="protein sequence ID" value="BAB31319.1"/>
    <property type="molecule type" value="mRNA"/>
</dbReference>
<dbReference type="EMBL" id="AK033526">
    <property type="protein sequence ID" value="BAC28341.1"/>
    <property type="molecule type" value="mRNA"/>
</dbReference>
<dbReference type="EMBL" id="AK033557">
    <property type="protein sequence ID" value="BAC28357.1"/>
    <property type="molecule type" value="mRNA"/>
</dbReference>
<dbReference type="EMBL" id="AK046837">
    <property type="protein sequence ID" value="BAC32892.1"/>
    <property type="molecule type" value="mRNA"/>
</dbReference>
<dbReference type="EMBL" id="BC039930">
    <property type="protein sequence ID" value="AAH39930.1"/>
    <property type="molecule type" value="mRNA"/>
</dbReference>
<dbReference type="CCDS" id="CCDS20637.1"/>
<dbReference type="RefSeq" id="NP_080621.1">
    <property type="nucleotide sequence ID" value="NM_026345.4"/>
</dbReference>
<dbReference type="SMR" id="Q9CR33"/>
<dbReference type="FunCoup" id="Q9CR33">
    <property type="interactions" value="18"/>
</dbReference>
<dbReference type="STRING" id="10090.ENSMUSP00000038346"/>
<dbReference type="GlyCosmos" id="Q9CR33">
    <property type="glycosylation" value="3 sites, No reported glycans"/>
</dbReference>
<dbReference type="GlyGen" id="Q9CR33">
    <property type="glycosylation" value="5 sites, 1 N-linked glycan (2 sites)"/>
</dbReference>
<dbReference type="iPTMnet" id="Q9CR33"/>
<dbReference type="PhosphoSitePlus" id="Q9CR33"/>
<dbReference type="PaxDb" id="10090-ENSMUSP00000038346"/>
<dbReference type="ProteomicsDB" id="287309"/>
<dbReference type="ABCD" id="Q9CR33">
    <property type="antibodies" value="12 sequenced antibodies"/>
</dbReference>
<dbReference type="Antibodypedia" id="2339">
    <property type="antibodies" value="119 antibodies from 24 providers"/>
</dbReference>
<dbReference type="DNASU" id="67729"/>
<dbReference type="Ensembl" id="ENSMUST00000047443.5">
    <property type="protein sequence ID" value="ENSMUSP00000038346.4"/>
    <property type="gene ID" value="ENSMUSG00000032718.5"/>
</dbReference>
<dbReference type="GeneID" id="67729"/>
<dbReference type="KEGG" id="mmu:67729"/>
<dbReference type="UCSC" id="uc009ekm.2">
    <property type="organism name" value="mouse"/>
</dbReference>
<dbReference type="AGR" id="MGI:1914979"/>
<dbReference type="CTD" id="54682"/>
<dbReference type="MGI" id="MGI:1914979">
    <property type="gene designation" value="Mansc1"/>
</dbReference>
<dbReference type="VEuPathDB" id="HostDB:ENSMUSG00000032718"/>
<dbReference type="eggNOG" id="ENOG502RZBP">
    <property type="taxonomic scope" value="Eukaryota"/>
</dbReference>
<dbReference type="GeneTree" id="ENSGT00940000153377"/>
<dbReference type="HOGENOM" id="CLU_054219_0_0_1"/>
<dbReference type="InParanoid" id="Q9CR33"/>
<dbReference type="OMA" id="SQNCPTK"/>
<dbReference type="OrthoDB" id="10071013at2759"/>
<dbReference type="PhylomeDB" id="Q9CR33"/>
<dbReference type="TreeFam" id="TF336966"/>
<dbReference type="BioGRID-ORCS" id="67729">
    <property type="hits" value="1 hit in 77 CRISPR screens"/>
</dbReference>
<dbReference type="ChiTaRS" id="Mansc1">
    <property type="organism name" value="mouse"/>
</dbReference>
<dbReference type="PRO" id="PR:Q9CR33"/>
<dbReference type="Proteomes" id="UP000000589">
    <property type="component" value="Chromosome 6"/>
</dbReference>
<dbReference type="RNAct" id="Q9CR33">
    <property type="molecule type" value="protein"/>
</dbReference>
<dbReference type="Bgee" id="ENSMUSG00000032718">
    <property type="expression patterns" value="Expressed in parotid gland and 166 other cell types or tissues"/>
</dbReference>
<dbReference type="GO" id="GO:0016020">
    <property type="term" value="C:membrane"/>
    <property type="evidence" value="ECO:0007669"/>
    <property type="project" value="UniProtKB-SubCell"/>
</dbReference>
<dbReference type="InterPro" id="IPR013980">
    <property type="entry name" value="MANSC_dom"/>
</dbReference>
<dbReference type="InterPro" id="IPR011106">
    <property type="entry name" value="MANSC_N"/>
</dbReference>
<dbReference type="PANTHER" id="PTHR46876">
    <property type="entry name" value="LOW-DENSITY LIPOPROTEIN RECEPTOR-RELATED PROTEIN 11"/>
    <property type="match status" value="1"/>
</dbReference>
<dbReference type="PANTHER" id="PTHR46876:SF3">
    <property type="entry name" value="MANSC DOMAIN CONTAINING 1"/>
    <property type="match status" value="1"/>
</dbReference>
<dbReference type="Pfam" id="PF07502">
    <property type="entry name" value="MANEC"/>
    <property type="match status" value="1"/>
</dbReference>
<dbReference type="SMART" id="SM00765">
    <property type="entry name" value="MANEC"/>
    <property type="match status" value="1"/>
</dbReference>
<dbReference type="PROSITE" id="PS50986">
    <property type="entry name" value="MANSC"/>
    <property type="match status" value="1"/>
</dbReference>
<name>MANS1_MOUSE</name>
<organism>
    <name type="scientific">Mus musculus</name>
    <name type="common">Mouse</name>
    <dbReference type="NCBI Taxonomy" id="10090"/>
    <lineage>
        <taxon>Eukaryota</taxon>
        <taxon>Metazoa</taxon>
        <taxon>Chordata</taxon>
        <taxon>Craniata</taxon>
        <taxon>Vertebrata</taxon>
        <taxon>Euteleostomi</taxon>
        <taxon>Mammalia</taxon>
        <taxon>Eutheria</taxon>
        <taxon>Euarchontoglires</taxon>
        <taxon>Glires</taxon>
        <taxon>Rodentia</taxon>
        <taxon>Myomorpha</taxon>
        <taxon>Muroidea</taxon>
        <taxon>Muridae</taxon>
        <taxon>Murinae</taxon>
        <taxon>Mus</taxon>
        <taxon>Mus</taxon>
    </lineage>
</organism>
<evidence type="ECO:0000255" key="1"/>
<evidence type="ECO:0000255" key="2">
    <source>
        <dbReference type="PROSITE-ProRule" id="PRU00341"/>
    </source>
</evidence>
<evidence type="ECO:0000256" key="3">
    <source>
        <dbReference type="SAM" id="MobiDB-lite"/>
    </source>
</evidence>
<evidence type="ECO:0000305" key="4"/>